<sequence>MAFKDTFNKMISYFDTDEVNEVEEDVAASTDNVIPRSQQSVRASSHPKQEPRNNHVQQDHQARSQEQTRSQMHPKHGTSERYYQQSQPKEGHEMVDRRKRMSTSGIANRREQYQQSTCSDQTTIALKYPRKYEDAQEIVDLLIVNECVLIDFQFMLDAQARRCLDFIDGASKVLYGSLQKVGSSMYLLAPSNVSVNIEEMTIPHTTQDIGFDFDMKRR</sequence>
<protein>
    <recommendedName>
        <fullName evidence="1">Cell division protein SepF</fullName>
    </recommendedName>
</protein>
<feature type="chain" id="PRO_0000334104" description="Cell division protein SepF">
    <location>
        <begin position="1"/>
        <end position="218"/>
    </location>
</feature>
<feature type="region of interest" description="Disordered" evidence="2">
    <location>
        <begin position="25"/>
        <end position="115"/>
    </location>
</feature>
<feature type="compositionally biased region" description="Polar residues" evidence="2">
    <location>
        <begin position="29"/>
        <end position="43"/>
    </location>
</feature>
<feature type="compositionally biased region" description="Basic and acidic residues" evidence="2">
    <location>
        <begin position="47"/>
        <end position="63"/>
    </location>
</feature>
<dbReference type="EMBL" id="CP000056">
    <property type="protein sequence ID" value="AAX72296.1"/>
    <property type="status" value="ALT_INIT"/>
    <property type="molecule type" value="Genomic_DNA"/>
</dbReference>
<dbReference type="RefSeq" id="WP_011018004.1">
    <property type="nucleotide sequence ID" value="NC_007296.2"/>
</dbReference>
<dbReference type="SMR" id="Q48SL4"/>
<dbReference type="KEGG" id="spb:M28_Spy1186"/>
<dbReference type="HOGENOM" id="CLU_078499_2_0_9"/>
<dbReference type="GO" id="GO:0005737">
    <property type="term" value="C:cytoplasm"/>
    <property type="evidence" value="ECO:0007669"/>
    <property type="project" value="UniProtKB-SubCell"/>
</dbReference>
<dbReference type="GO" id="GO:0000917">
    <property type="term" value="P:division septum assembly"/>
    <property type="evidence" value="ECO:0007669"/>
    <property type="project" value="UniProtKB-KW"/>
</dbReference>
<dbReference type="GO" id="GO:0043093">
    <property type="term" value="P:FtsZ-dependent cytokinesis"/>
    <property type="evidence" value="ECO:0007669"/>
    <property type="project" value="UniProtKB-UniRule"/>
</dbReference>
<dbReference type="Gene3D" id="3.30.110.150">
    <property type="entry name" value="SepF-like protein"/>
    <property type="match status" value="1"/>
</dbReference>
<dbReference type="HAMAP" id="MF_01197">
    <property type="entry name" value="SepF"/>
    <property type="match status" value="1"/>
</dbReference>
<dbReference type="InterPro" id="IPR023052">
    <property type="entry name" value="Cell_div_SepF"/>
</dbReference>
<dbReference type="InterPro" id="IPR007561">
    <property type="entry name" value="Cell_div_SepF/SepF-rel"/>
</dbReference>
<dbReference type="InterPro" id="IPR038594">
    <property type="entry name" value="SepF-like_sf"/>
</dbReference>
<dbReference type="PANTHER" id="PTHR35798">
    <property type="entry name" value="CELL DIVISION PROTEIN SEPF"/>
    <property type="match status" value="1"/>
</dbReference>
<dbReference type="PANTHER" id="PTHR35798:SF1">
    <property type="entry name" value="CELL DIVISION PROTEIN SEPF"/>
    <property type="match status" value="1"/>
</dbReference>
<dbReference type="Pfam" id="PF04472">
    <property type="entry name" value="SepF"/>
    <property type="match status" value="1"/>
</dbReference>
<keyword id="KW-0131">Cell cycle</keyword>
<keyword id="KW-0132">Cell division</keyword>
<keyword id="KW-0963">Cytoplasm</keyword>
<keyword id="KW-0717">Septation</keyword>
<reference key="1">
    <citation type="journal article" date="2005" name="J. Infect. Dis.">
        <title>Genome sequence of a serotype M28 strain of group A Streptococcus: potential new insights into puerperal sepsis and bacterial disease specificity.</title>
        <authorList>
            <person name="Green N.M."/>
            <person name="Zhang S."/>
            <person name="Porcella S.F."/>
            <person name="Nagiec M.J."/>
            <person name="Barbian K.D."/>
            <person name="Beres S.B."/>
            <person name="Lefebvre R.B."/>
            <person name="Musser J.M."/>
        </authorList>
    </citation>
    <scope>NUCLEOTIDE SEQUENCE [LARGE SCALE GENOMIC DNA]</scope>
    <source>
        <strain>MGAS6180</strain>
    </source>
</reference>
<organism>
    <name type="scientific">Streptococcus pyogenes serotype M28 (strain MGAS6180)</name>
    <dbReference type="NCBI Taxonomy" id="319701"/>
    <lineage>
        <taxon>Bacteria</taxon>
        <taxon>Bacillati</taxon>
        <taxon>Bacillota</taxon>
        <taxon>Bacilli</taxon>
        <taxon>Lactobacillales</taxon>
        <taxon>Streptococcaceae</taxon>
        <taxon>Streptococcus</taxon>
    </lineage>
</organism>
<comment type="function">
    <text evidence="1">Cell division protein that is part of the divisome complex and is recruited early to the Z-ring. Probably stimulates Z-ring formation, perhaps through the cross-linking of FtsZ protofilaments. Its function overlaps with FtsA.</text>
</comment>
<comment type="subunit">
    <text evidence="1">Homodimer. Interacts with FtsZ.</text>
</comment>
<comment type="subcellular location">
    <subcellularLocation>
        <location evidence="1">Cytoplasm</location>
    </subcellularLocation>
    <text evidence="1">Localizes to the division site, in a FtsZ-dependent manner.</text>
</comment>
<comment type="similarity">
    <text evidence="1">Belongs to the SepF family.</text>
</comment>
<comment type="sequence caution" evidence="3">
    <conflict type="erroneous initiation">
        <sequence resource="EMBL-CDS" id="AAX72296"/>
    </conflict>
</comment>
<proteinExistence type="inferred from homology"/>
<name>SEPF_STRPM</name>
<evidence type="ECO:0000255" key="1">
    <source>
        <dbReference type="HAMAP-Rule" id="MF_01197"/>
    </source>
</evidence>
<evidence type="ECO:0000256" key="2">
    <source>
        <dbReference type="SAM" id="MobiDB-lite"/>
    </source>
</evidence>
<evidence type="ECO:0000305" key="3"/>
<gene>
    <name evidence="1" type="primary">sepF</name>
    <name type="ordered locus">M28_Spy1186</name>
</gene>
<accession>Q48SL4</accession>